<evidence type="ECO:0000250" key="1">
    <source>
        <dbReference type="UniProtKB" id="Q5XJA5"/>
    </source>
</evidence>
<evidence type="ECO:0000256" key="2">
    <source>
        <dbReference type="SAM" id="MobiDB-lite"/>
    </source>
</evidence>
<evidence type="ECO:0000305" key="3"/>
<dbReference type="EMBL" id="AAFI02000109">
    <property type="protein sequence ID" value="EAL63354.1"/>
    <property type="molecule type" value="Genomic_DNA"/>
</dbReference>
<dbReference type="RefSeq" id="XP_636859.1">
    <property type="nucleotide sequence ID" value="XM_631767.1"/>
</dbReference>
<dbReference type="FunCoup" id="Q54JD4">
    <property type="interactions" value="57"/>
</dbReference>
<dbReference type="STRING" id="44689.Q54JD4"/>
<dbReference type="GlyGen" id="Q54JD4">
    <property type="glycosylation" value="1 site"/>
</dbReference>
<dbReference type="PaxDb" id="44689-DDB0304484"/>
<dbReference type="EnsemblProtists" id="EAL63354">
    <property type="protein sequence ID" value="EAL63354"/>
    <property type="gene ID" value="DDB_G0288133"/>
</dbReference>
<dbReference type="GeneID" id="8626469"/>
<dbReference type="KEGG" id="ddi:DDB_G0288133"/>
<dbReference type="dictyBase" id="DDB_G0288133"/>
<dbReference type="VEuPathDB" id="AmoebaDB:DDB_G0288133"/>
<dbReference type="eggNOG" id="ENOG502RHEH">
    <property type="taxonomic scope" value="Eukaryota"/>
</dbReference>
<dbReference type="HOGENOM" id="CLU_1051421_0_0_1"/>
<dbReference type="InParanoid" id="Q54JD4"/>
<dbReference type="OMA" id="RAGRNEH"/>
<dbReference type="PhylomeDB" id="Q54JD4"/>
<dbReference type="Reactome" id="R-DDI-114608">
    <property type="pathway name" value="Platelet degranulation"/>
</dbReference>
<dbReference type="PRO" id="PR:Q54JD4"/>
<dbReference type="Proteomes" id="UP000002195">
    <property type="component" value="Chromosome 5"/>
</dbReference>
<dbReference type="GO" id="GO:0005737">
    <property type="term" value="C:cytoplasm"/>
    <property type="evidence" value="ECO:0000318"/>
    <property type="project" value="GO_Central"/>
</dbReference>
<dbReference type="GO" id="GO:0005634">
    <property type="term" value="C:nucleus"/>
    <property type="evidence" value="ECO:0000318"/>
    <property type="project" value="GO_Central"/>
</dbReference>
<dbReference type="GO" id="GO:0045335">
    <property type="term" value="C:phagocytic vesicle"/>
    <property type="evidence" value="ECO:0007005"/>
    <property type="project" value="dictyBase"/>
</dbReference>
<dbReference type="GO" id="GO:0003723">
    <property type="term" value="F:RNA binding"/>
    <property type="evidence" value="ECO:0000318"/>
    <property type="project" value="GO_Central"/>
</dbReference>
<dbReference type="GO" id="GO:0006417">
    <property type="term" value="P:regulation of translation"/>
    <property type="evidence" value="ECO:0007669"/>
    <property type="project" value="UniProtKB-KW"/>
</dbReference>
<dbReference type="Gene3D" id="6.10.140.1040">
    <property type="match status" value="1"/>
</dbReference>
<dbReference type="InterPro" id="IPR039764">
    <property type="entry name" value="HABP4/SERBP1-like"/>
</dbReference>
<dbReference type="InterPro" id="IPR006861">
    <property type="entry name" value="HABP4_PAIRBP1-bd"/>
</dbReference>
<dbReference type="PANTHER" id="PTHR12299:SF17">
    <property type="entry name" value="AT19571P-RELATED"/>
    <property type="match status" value="1"/>
</dbReference>
<dbReference type="PANTHER" id="PTHR12299">
    <property type="entry name" value="HYALURONIC ACID-BINDING PROTEIN 4"/>
    <property type="match status" value="1"/>
</dbReference>
<dbReference type="Pfam" id="PF04774">
    <property type="entry name" value="HABP4_PAI-RBP1"/>
    <property type="match status" value="1"/>
</dbReference>
<dbReference type="SMART" id="SM01233">
    <property type="entry name" value="HABP4_PAI-RBP1"/>
    <property type="match status" value="1"/>
</dbReference>
<feature type="chain" id="PRO_0000393340" description="Uncharacterized protein DDB_G0288133">
    <location>
        <begin position="1"/>
        <end position="265"/>
    </location>
</feature>
<feature type="region of interest" description="Disordered" evidence="2">
    <location>
        <begin position="1"/>
        <end position="160"/>
    </location>
</feature>
<feature type="compositionally biased region" description="Low complexity" evidence="2">
    <location>
        <begin position="28"/>
        <end position="42"/>
    </location>
</feature>
<feature type="compositionally biased region" description="Basic and acidic residues" evidence="2">
    <location>
        <begin position="73"/>
        <end position="85"/>
    </location>
</feature>
<feature type="compositionally biased region" description="Basic and acidic residues" evidence="2">
    <location>
        <begin position="102"/>
        <end position="119"/>
    </location>
</feature>
<reference key="1">
    <citation type="journal article" date="2005" name="Nature">
        <title>The genome of the social amoeba Dictyostelium discoideum.</title>
        <authorList>
            <person name="Eichinger L."/>
            <person name="Pachebat J.A."/>
            <person name="Gloeckner G."/>
            <person name="Rajandream M.A."/>
            <person name="Sucgang R."/>
            <person name="Berriman M."/>
            <person name="Song J."/>
            <person name="Olsen R."/>
            <person name="Szafranski K."/>
            <person name="Xu Q."/>
            <person name="Tunggal B."/>
            <person name="Kummerfeld S."/>
            <person name="Madera M."/>
            <person name="Konfortov B.A."/>
            <person name="Rivero F."/>
            <person name="Bankier A.T."/>
            <person name="Lehmann R."/>
            <person name="Hamlin N."/>
            <person name="Davies R."/>
            <person name="Gaudet P."/>
            <person name="Fey P."/>
            <person name="Pilcher K."/>
            <person name="Chen G."/>
            <person name="Saunders D."/>
            <person name="Sodergren E.J."/>
            <person name="Davis P."/>
            <person name="Kerhornou A."/>
            <person name="Nie X."/>
            <person name="Hall N."/>
            <person name="Anjard C."/>
            <person name="Hemphill L."/>
            <person name="Bason N."/>
            <person name="Farbrother P."/>
            <person name="Desany B."/>
            <person name="Just E."/>
            <person name="Morio T."/>
            <person name="Rost R."/>
            <person name="Churcher C.M."/>
            <person name="Cooper J."/>
            <person name="Haydock S."/>
            <person name="van Driessche N."/>
            <person name="Cronin A."/>
            <person name="Goodhead I."/>
            <person name="Muzny D.M."/>
            <person name="Mourier T."/>
            <person name="Pain A."/>
            <person name="Lu M."/>
            <person name="Harper D."/>
            <person name="Lindsay R."/>
            <person name="Hauser H."/>
            <person name="James K.D."/>
            <person name="Quiles M."/>
            <person name="Madan Babu M."/>
            <person name="Saito T."/>
            <person name="Buchrieser C."/>
            <person name="Wardroper A."/>
            <person name="Felder M."/>
            <person name="Thangavelu M."/>
            <person name="Johnson D."/>
            <person name="Knights A."/>
            <person name="Loulseged H."/>
            <person name="Mungall K.L."/>
            <person name="Oliver K."/>
            <person name="Price C."/>
            <person name="Quail M.A."/>
            <person name="Urushihara H."/>
            <person name="Hernandez J."/>
            <person name="Rabbinowitsch E."/>
            <person name="Steffen D."/>
            <person name="Sanders M."/>
            <person name="Ma J."/>
            <person name="Kohara Y."/>
            <person name="Sharp S."/>
            <person name="Simmonds M.N."/>
            <person name="Spiegler S."/>
            <person name="Tivey A."/>
            <person name="Sugano S."/>
            <person name="White B."/>
            <person name="Walker D."/>
            <person name="Woodward J.R."/>
            <person name="Winckler T."/>
            <person name="Tanaka Y."/>
            <person name="Shaulsky G."/>
            <person name="Schleicher M."/>
            <person name="Weinstock G.M."/>
            <person name="Rosenthal A."/>
            <person name="Cox E.C."/>
            <person name="Chisholm R.L."/>
            <person name="Gibbs R.A."/>
            <person name="Loomis W.F."/>
            <person name="Platzer M."/>
            <person name="Kay R.R."/>
            <person name="Williams J.G."/>
            <person name="Dear P.H."/>
            <person name="Noegel A.A."/>
            <person name="Barrell B.G."/>
            <person name="Kuspa A."/>
        </authorList>
    </citation>
    <scope>NUCLEOTIDE SEQUENCE [LARGE SCALE GENOMIC DNA]</scope>
    <source>
        <strain>AX4</strain>
    </source>
</reference>
<keyword id="KW-1185">Reference proteome</keyword>
<keyword id="KW-0810">Translation regulation</keyword>
<organism>
    <name type="scientific">Dictyostelium discoideum</name>
    <name type="common">Social amoeba</name>
    <dbReference type="NCBI Taxonomy" id="44689"/>
    <lineage>
        <taxon>Eukaryota</taxon>
        <taxon>Amoebozoa</taxon>
        <taxon>Evosea</taxon>
        <taxon>Eumycetozoa</taxon>
        <taxon>Dictyostelia</taxon>
        <taxon>Dictyosteliales</taxon>
        <taxon>Dictyosteliaceae</taxon>
        <taxon>Dictyostelium</taxon>
    </lineage>
</organism>
<proteinExistence type="inferred from homology"/>
<accession>Q54JD4</accession>
<comment type="function">
    <text evidence="1">Ribosome-binding protein that acts as a regulator of mRNA translation by promoting ribosome inactivation.</text>
</comment>
<comment type="similarity">
    <text evidence="3">Belongs to the SERBP1-HABP4 family.</text>
</comment>
<gene>
    <name type="ORF">DDB_G0288133</name>
</gene>
<name>Y8133_DICDI</name>
<protein>
    <recommendedName>
        <fullName>Uncharacterized protein DDB_G0288133</fullName>
    </recommendedName>
</protein>
<sequence>MDKSKNLFDLLQDDEEVEKKPTTKSTQAAAAPVAAKKPVAPKTENKVENRSPKLGGQSKPKRVNNGEQQVATSEERQNTKRDSKSYPKHQPRTDATGNIRNRQFDRKSGTGRPHNENKKGGAGQGNWGKEGSVDAETNVATVTPTEGEKESTEPVVAAPVEDKTLTLGEYLKQQGSVTLEAPKLRVAGEGETKNAQWDEFEPIQREVVKQRDTKSVKEEKKTKKNVIQVELKSAPSTQRPKGNTKKVVKGVDVTDVNIFPSLSKA</sequence>